<comment type="similarity">
    <text evidence="1">Belongs to the bacterial ribosomal protein bL35 family.</text>
</comment>
<keyword id="KW-0687">Ribonucleoprotein</keyword>
<keyword id="KW-0689">Ribosomal protein</keyword>
<protein>
    <recommendedName>
        <fullName evidence="1">Large ribosomal subunit protein bL35</fullName>
    </recommendedName>
    <alternativeName>
        <fullName evidence="2">50S ribosomal protein L35</fullName>
    </alternativeName>
</protein>
<proteinExistence type="inferred from homology"/>
<accession>Q662H5</accession>
<reference key="1">
    <citation type="journal article" date="2004" name="Nucleic Acids Res.">
        <title>Comparative analysis of the Borrelia garinii genome.</title>
        <authorList>
            <person name="Gloeckner G."/>
            <person name="Lehmann R."/>
            <person name="Romualdi A."/>
            <person name="Pradella S."/>
            <person name="Schulte-Spechtel U."/>
            <person name="Schilhabel M."/>
            <person name="Wilske B."/>
            <person name="Suehnel J."/>
            <person name="Platzer M."/>
        </authorList>
    </citation>
    <scope>NUCLEOTIDE SEQUENCE [LARGE SCALE GENOMIC DNA]</scope>
    <source>
        <strain>ATCC BAA-2496 / DSM 23469 / PBi</strain>
    </source>
</reference>
<organism>
    <name type="scientific">Borrelia garinii subsp. bavariensis (strain ATCC BAA-2496 / DSM 23469 / PBi)</name>
    <name type="common">Borreliella bavariensis</name>
    <dbReference type="NCBI Taxonomy" id="290434"/>
    <lineage>
        <taxon>Bacteria</taxon>
        <taxon>Pseudomonadati</taxon>
        <taxon>Spirochaetota</taxon>
        <taxon>Spirochaetia</taxon>
        <taxon>Spirochaetales</taxon>
        <taxon>Borreliaceae</taxon>
        <taxon>Borreliella</taxon>
    </lineage>
</organism>
<dbReference type="EMBL" id="CP000013">
    <property type="protein sequence ID" value="AAU07046.1"/>
    <property type="molecule type" value="Genomic_DNA"/>
</dbReference>
<dbReference type="RefSeq" id="WP_004792027.1">
    <property type="nucleotide sequence ID" value="NZ_CP028872.1"/>
</dbReference>
<dbReference type="SMR" id="Q662H5"/>
<dbReference type="GeneID" id="83865659"/>
<dbReference type="KEGG" id="bga:BG0188"/>
<dbReference type="eggNOG" id="COG0291">
    <property type="taxonomic scope" value="Bacteria"/>
</dbReference>
<dbReference type="HOGENOM" id="CLU_169643_1_1_12"/>
<dbReference type="OrthoDB" id="47476at2"/>
<dbReference type="Proteomes" id="UP000002276">
    <property type="component" value="Chromosome"/>
</dbReference>
<dbReference type="GO" id="GO:0022625">
    <property type="term" value="C:cytosolic large ribosomal subunit"/>
    <property type="evidence" value="ECO:0007669"/>
    <property type="project" value="TreeGrafter"/>
</dbReference>
<dbReference type="GO" id="GO:0003735">
    <property type="term" value="F:structural constituent of ribosome"/>
    <property type="evidence" value="ECO:0007669"/>
    <property type="project" value="InterPro"/>
</dbReference>
<dbReference type="GO" id="GO:0006412">
    <property type="term" value="P:translation"/>
    <property type="evidence" value="ECO:0007669"/>
    <property type="project" value="UniProtKB-UniRule"/>
</dbReference>
<dbReference type="FunFam" id="4.10.410.60:FF:000001">
    <property type="entry name" value="50S ribosomal protein L35"/>
    <property type="match status" value="1"/>
</dbReference>
<dbReference type="Gene3D" id="4.10.410.60">
    <property type="match status" value="1"/>
</dbReference>
<dbReference type="HAMAP" id="MF_00514">
    <property type="entry name" value="Ribosomal_bL35"/>
    <property type="match status" value="1"/>
</dbReference>
<dbReference type="InterPro" id="IPR001706">
    <property type="entry name" value="Ribosomal_bL35"/>
</dbReference>
<dbReference type="InterPro" id="IPR021137">
    <property type="entry name" value="Ribosomal_bL35-like"/>
</dbReference>
<dbReference type="InterPro" id="IPR018265">
    <property type="entry name" value="Ribosomal_bL35_CS"/>
</dbReference>
<dbReference type="InterPro" id="IPR037229">
    <property type="entry name" value="Ribosomal_bL35_sf"/>
</dbReference>
<dbReference type="NCBIfam" id="TIGR00001">
    <property type="entry name" value="rpmI_bact"/>
    <property type="match status" value="1"/>
</dbReference>
<dbReference type="PANTHER" id="PTHR33343">
    <property type="entry name" value="54S RIBOSOMAL PROTEIN BL35M"/>
    <property type="match status" value="1"/>
</dbReference>
<dbReference type="PANTHER" id="PTHR33343:SF1">
    <property type="entry name" value="LARGE RIBOSOMAL SUBUNIT PROTEIN BL35M"/>
    <property type="match status" value="1"/>
</dbReference>
<dbReference type="Pfam" id="PF01632">
    <property type="entry name" value="Ribosomal_L35p"/>
    <property type="match status" value="1"/>
</dbReference>
<dbReference type="PRINTS" id="PR00064">
    <property type="entry name" value="RIBOSOMALL35"/>
</dbReference>
<dbReference type="SUPFAM" id="SSF143034">
    <property type="entry name" value="L35p-like"/>
    <property type="match status" value="1"/>
</dbReference>
<dbReference type="PROSITE" id="PS00936">
    <property type="entry name" value="RIBOSOMAL_L35"/>
    <property type="match status" value="1"/>
</dbReference>
<name>RL35_BORGP</name>
<sequence length="66" mass="7789">MASKMKTRKSAKKRYSFTVNGKVKYKKQNLRHILTKKSSKRKRNLRKSGNLSCFEVKRIKTLLPYG</sequence>
<evidence type="ECO:0000255" key="1">
    <source>
        <dbReference type="HAMAP-Rule" id="MF_00514"/>
    </source>
</evidence>
<evidence type="ECO:0000305" key="2"/>
<feature type="chain" id="PRO_0000258643" description="Large ribosomal subunit protein bL35">
    <location>
        <begin position="1"/>
        <end position="66"/>
    </location>
</feature>
<gene>
    <name evidence="1" type="primary">rpmI</name>
    <name type="ordered locus">BG0188</name>
</gene>